<feature type="chain" id="PRO_1000194420" description="Ribonuclease 3">
    <location>
        <begin position="1"/>
        <end position="244"/>
    </location>
</feature>
<feature type="domain" description="RNase III" evidence="1">
    <location>
        <begin position="7"/>
        <end position="134"/>
    </location>
</feature>
<feature type="domain" description="DRBM" evidence="1">
    <location>
        <begin position="161"/>
        <end position="230"/>
    </location>
</feature>
<feature type="active site" evidence="1">
    <location>
        <position position="51"/>
    </location>
</feature>
<feature type="active site" evidence="1">
    <location>
        <position position="123"/>
    </location>
</feature>
<feature type="binding site" evidence="1">
    <location>
        <position position="47"/>
    </location>
    <ligand>
        <name>Mg(2+)</name>
        <dbReference type="ChEBI" id="CHEBI:18420"/>
    </ligand>
</feature>
<feature type="binding site" evidence="1">
    <location>
        <position position="120"/>
    </location>
    <ligand>
        <name>Mg(2+)</name>
        <dbReference type="ChEBI" id="CHEBI:18420"/>
    </ligand>
</feature>
<feature type="binding site" evidence="1">
    <location>
        <position position="123"/>
    </location>
    <ligand>
        <name>Mg(2+)</name>
        <dbReference type="ChEBI" id="CHEBI:18420"/>
    </ligand>
</feature>
<name>RNC_CLOK1</name>
<keyword id="KW-0963">Cytoplasm</keyword>
<keyword id="KW-0255">Endonuclease</keyword>
<keyword id="KW-0378">Hydrolase</keyword>
<keyword id="KW-0460">Magnesium</keyword>
<keyword id="KW-0479">Metal-binding</keyword>
<keyword id="KW-0507">mRNA processing</keyword>
<keyword id="KW-0540">Nuclease</keyword>
<keyword id="KW-0694">RNA-binding</keyword>
<keyword id="KW-0698">rRNA processing</keyword>
<keyword id="KW-0699">rRNA-binding</keyword>
<keyword id="KW-0819">tRNA processing</keyword>
<organism>
    <name type="scientific">Clostridium kluyveri (strain NBRC 12016)</name>
    <dbReference type="NCBI Taxonomy" id="583346"/>
    <lineage>
        <taxon>Bacteria</taxon>
        <taxon>Bacillati</taxon>
        <taxon>Bacillota</taxon>
        <taxon>Clostridia</taxon>
        <taxon>Eubacteriales</taxon>
        <taxon>Clostridiaceae</taxon>
        <taxon>Clostridium</taxon>
    </lineage>
</organism>
<comment type="function">
    <text evidence="1">Digests double-stranded RNA. Involved in the processing of primary rRNA transcript to yield the immediate precursors to the large and small rRNAs (23S and 16S). Processes some mRNAs, and tRNAs when they are encoded in the rRNA operon. Processes pre-crRNA and tracrRNA of type II CRISPR loci if present in the organism.</text>
</comment>
<comment type="catalytic activity">
    <reaction evidence="1">
        <text>Endonucleolytic cleavage to 5'-phosphomonoester.</text>
        <dbReference type="EC" id="3.1.26.3"/>
    </reaction>
</comment>
<comment type="cofactor">
    <cofactor evidence="1">
        <name>Mg(2+)</name>
        <dbReference type="ChEBI" id="CHEBI:18420"/>
    </cofactor>
</comment>
<comment type="subunit">
    <text evidence="1">Homodimer.</text>
</comment>
<comment type="subcellular location">
    <subcellularLocation>
        <location evidence="1">Cytoplasm</location>
    </subcellularLocation>
</comment>
<comment type="similarity">
    <text evidence="1">Belongs to the ribonuclease III family.</text>
</comment>
<reference key="1">
    <citation type="submission" date="2005-09" db="EMBL/GenBank/DDBJ databases">
        <title>Complete genome sequence of Clostridium kluyveri and comparative genomics of Clostridia species.</title>
        <authorList>
            <person name="Inui M."/>
            <person name="Nonaka H."/>
            <person name="Shinoda Y."/>
            <person name="Ikenaga Y."/>
            <person name="Abe M."/>
            <person name="Naito K."/>
            <person name="Vertes A.A."/>
            <person name="Yukawa H."/>
        </authorList>
    </citation>
    <scope>NUCLEOTIDE SEQUENCE [LARGE SCALE GENOMIC DNA]</scope>
    <source>
        <strain>NBRC 12016</strain>
    </source>
</reference>
<dbReference type="EC" id="3.1.26.3" evidence="1"/>
<dbReference type="EMBL" id="AP009049">
    <property type="protein sequence ID" value="BAH06343.1"/>
    <property type="molecule type" value="Genomic_DNA"/>
</dbReference>
<dbReference type="RefSeq" id="WP_012101785.1">
    <property type="nucleotide sequence ID" value="NC_011837.1"/>
</dbReference>
<dbReference type="SMR" id="B9E1G8"/>
<dbReference type="KEGG" id="ckr:CKR_1292"/>
<dbReference type="HOGENOM" id="CLU_000907_1_3_9"/>
<dbReference type="Proteomes" id="UP000007969">
    <property type="component" value="Chromosome"/>
</dbReference>
<dbReference type="GO" id="GO:0005737">
    <property type="term" value="C:cytoplasm"/>
    <property type="evidence" value="ECO:0007669"/>
    <property type="project" value="UniProtKB-SubCell"/>
</dbReference>
<dbReference type="GO" id="GO:0003725">
    <property type="term" value="F:double-stranded RNA binding"/>
    <property type="evidence" value="ECO:0007669"/>
    <property type="project" value="TreeGrafter"/>
</dbReference>
<dbReference type="GO" id="GO:0046872">
    <property type="term" value="F:metal ion binding"/>
    <property type="evidence" value="ECO:0007669"/>
    <property type="project" value="UniProtKB-KW"/>
</dbReference>
<dbReference type="GO" id="GO:0004525">
    <property type="term" value="F:ribonuclease III activity"/>
    <property type="evidence" value="ECO:0007669"/>
    <property type="project" value="UniProtKB-UniRule"/>
</dbReference>
<dbReference type="GO" id="GO:0019843">
    <property type="term" value="F:rRNA binding"/>
    <property type="evidence" value="ECO:0007669"/>
    <property type="project" value="UniProtKB-KW"/>
</dbReference>
<dbReference type="GO" id="GO:0006397">
    <property type="term" value="P:mRNA processing"/>
    <property type="evidence" value="ECO:0007669"/>
    <property type="project" value="UniProtKB-UniRule"/>
</dbReference>
<dbReference type="GO" id="GO:0010468">
    <property type="term" value="P:regulation of gene expression"/>
    <property type="evidence" value="ECO:0007669"/>
    <property type="project" value="TreeGrafter"/>
</dbReference>
<dbReference type="GO" id="GO:0006364">
    <property type="term" value="P:rRNA processing"/>
    <property type="evidence" value="ECO:0007669"/>
    <property type="project" value="UniProtKB-UniRule"/>
</dbReference>
<dbReference type="GO" id="GO:0008033">
    <property type="term" value="P:tRNA processing"/>
    <property type="evidence" value="ECO:0007669"/>
    <property type="project" value="UniProtKB-KW"/>
</dbReference>
<dbReference type="CDD" id="cd10845">
    <property type="entry name" value="DSRM_RNAse_III_family"/>
    <property type="match status" value="1"/>
</dbReference>
<dbReference type="CDD" id="cd00593">
    <property type="entry name" value="RIBOc"/>
    <property type="match status" value="1"/>
</dbReference>
<dbReference type="FunFam" id="1.10.1520.10:FF:000001">
    <property type="entry name" value="Ribonuclease 3"/>
    <property type="match status" value="1"/>
</dbReference>
<dbReference type="FunFam" id="3.30.160.20:FF:000003">
    <property type="entry name" value="Ribonuclease 3"/>
    <property type="match status" value="1"/>
</dbReference>
<dbReference type="Gene3D" id="3.30.160.20">
    <property type="match status" value="1"/>
</dbReference>
<dbReference type="Gene3D" id="1.10.1520.10">
    <property type="entry name" value="Ribonuclease III domain"/>
    <property type="match status" value="1"/>
</dbReference>
<dbReference type="HAMAP" id="MF_00104">
    <property type="entry name" value="RNase_III"/>
    <property type="match status" value="1"/>
</dbReference>
<dbReference type="InterPro" id="IPR014720">
    <property type="entry name" value="dsRBD_dom"/>
</dbReference>
<dbReference type="InterPro" id="IPR011907">
    <property type="entry name" value="RNase_III"/>
</dbReference>
<dbReference type="InterPro" id="IPR000999">
    <property type="entry name" value="RNase_III_dom"/>
</dbReference>
<dbReference type="InterPro" id="IPR036389">
    <property type="entry name" value="RNase_III_sf"/>
</dbReference>
<dbReference type="NCBIfam" id="TIGR02191">
    <property type="entry name" value="RNaseIII"/>
    <property type="match status" value="1"/>
</dbReference>
<dbReference type="PANTHER" id="PTHR11207:SF0">
    <property type="entry name" value="RIBONUCLEASE 3"/>
    <property type="match status" value="1"/>
</dbReference>
<dbReference type="PANTHER" id="PTHR11207">
    <property type="entry name" value="RIBONUCLEASE III"/>
    <property type="match status" value="1"/>
</dbReference>
<dbReference type="Pfam" id="PF00035">
    <property type="entry name" value="dsrm"/>
    <property type="match status" value="1"/>
</dbReference>
<dbReference type="Pfam" id="PF14622">
    <property type="entry name" value="Ribonucleas_3_3"/>
    <property type="match status" value="1"/>
</dbReference>
<dbReference type="SMART" id="SM00358">
    <property type="entry name" value="DSRM"/>
    <property type="match status" value="1"/>
</dbReference>
<dbReference type="SMART" id="SM00535">
    <property type="entry name" value="RIBOc"/>
    <property type="match status" value="1"/>
</dbReference>
<dbReference type="SUPFAM" id="SSF54768">
    <property type="entry name" value="dsRNA-binding domain-like"/>
    <property type="match status" value="1"/>
</dbReference>
<dbReference type="SUPFAM" id="SSF69065">
    <property type="entry name" value="RNase III domain-like"/>
    <property type="match status" value="1"/>
</dbReference>
<dbReference type="PROSITE" id="PS50137">
    <property type="entry name" value="DS_RBD"/>
    <property type="match status" value="1"/>
</dbReference>
<dbReference type="PROSITE" id="PS00517">
    <property type="entry name" value="RNASE_3_1"/>
    <property type="match status" value="1"/>
</dbReference>
<dbReference type="PROSITE" id="PS50142">
    <property type="entry name" value="RNASE_3_2"/>
    <property type="match status" value="1"/>
</dbReference>
<evidence type="ECO:0000255" key="1">
    <source>
        <dbReference type="HAMAP-Rule" id="MF_00104"/>
    </source>
</evidence>
<gene>
    <name evidence="1" type="primary">rnc</name>
    <name type="ordered locus">CKR_1292</name>
</gene>
<protein>
    <recommendedName>
        <fullName evidence="1">Ribonuclease 3</fullName>
        <ecNumber evidence="1">3.1.26.3</ecNumber>
    </recommendedName>
    <alternativeName>
        <fullName evidence="1">Ribonuclease III</fullName>
        <shortName evidence="1">RNase III</shortName>
    </alternativeName>
</protein>
<proteinExistence type="inferred from homology"/>
<accession>B9E1G8</accession>
<sequence length="244" mass="28029">MEKVNFFEEVEKTLNISFNDKELIDTALTHSSYANGKKGVKFNERMEFLGDSVLQLCISEYLFLIYKSKSEGELTKKRSLIVCENSLYEVAKKWNIGKYIKMSKGEEITGGRERTSILANCVEAIIAAIYIDSGYKKTKQFIIDNFKDIIEKAIKNQIVLDYKTNLQEIVQQDGDIHIEYMLIKYEGPPHRRKFYTKVCVANNVMGSGVGYTKKESEQNAAQDALKKLKSEDKWNKEGIDTNEK</sequence>